<evidence type="ECO:0000255" key="1">
    <source>
        <dbReference type="HAMAP-Rule" id="MF_00134"/>
    </source>
</evidence>
<feature type="chain" id="PRO_1000018530" description="Indole-3-glycerol phosphate synthase">
    <location>
        <begin position="1"/>
        <end position="278"/>
    </location>
</feature>
<keyword id="KW-0028">Amino-acid biosynthesis</keyword>
<keyword id="KW-0057">Aromatic amino acid biosynthesis</keyword>
<keyword id="KW-0210">Decarboxylase</keyword>
<keyword id="KW-0456">Lyase</keyword>
<keyword id="KW-0822">Tryptophan biosynthesis</keyword>
<name>TRPC_PSEP7</name>
<reference key="1">
    <citation type="submission" date="2007-06" db="EMBL/GenBank/DDBJ databases">
        <authorList>
            <person name="Dodson R.J."/>
            <person name="Harkins D."/>
            <person name="Paulsen I.T."/>
        </authorList>
    </citation>
    <scope>NUCLEOTIDE SEQUENCE [LARGE SCALE GENOMIC DNA]</scope>
    <source>
        <strain>DSM 24068 / PA7</strain>
    </source>
</reference>
<protein>
    <recommendedName>
        <fullName evidence="1">Indole-3-glycerol phosphate synthase</fullName>
        <shortName evidence="1">IGPS</shortName>
        <ecNumber evidence="1">4.1.1.48</ecNumber>
    </recommendedName>
</protein>
<proteinExistence type="inferred from homology"/>
<dbReference type="EC" id="4.1.1.48" evidence="1"/>
<dbReference type="EMBL" id="CP000744">
    <property type="protein sequence ID" value="ABR81206.1"/>
    <property type="molecule type" value="Genomic_DNA"/>
</dbReference>
<dbReference type="RefSeq" id="WP_012074211.1">
    <property type="nucleotide sequence ID" value="NC_009656.1"/>
</dbReference>
<dbReference type="SMR" id="A6UZF2"/>
<dbReference type="KEGG" id="pap:PSPA7_0792"/>
<dbReference type="HOGENOM" id="CLU_034247_2_0_6"/>
<dbReference type="UniPathway" id="UPA00035">
    <property type="reaction ID" value="UER00043"/>
</dbReference>
<dbReference type="Proteomes" id="UP000001582">
    <property type="component" value="Chromosome"/>
</dbReference>
<dbReference type="GO" id="GO:0004425">
    <property type="term" value="F:indole-3-glycerol-phosphate synthase activity"/>
    <property type="evidence" value="ECO:0007669"/>
    <property type="project" value="UniProtKB-UniRule"/>
</dbReference>
<dbReference type="GO" id="GO:0004640">
    <property type="term" value="F:phosphoribosylanthranilate isomerase activity"/>
    <property type="evidence" value="ECO:0007669"/>
    <property type="project" value="TreeGrafter"/>
</dbReference>
<dbReference type="GO" id="GO:0000162">
    <property type="term" value="P:L-tryptophan biosynthetic process"/>
    <property type="evidence" value="ECO:0007669"/>
    <property type="project" value="UniProtKB-UniRule"/>
</dbReference>
<dbReference type="CDD" id="cd00331">
    <property type="entry name" value="IGPS"/>
    <property type="match status" value="1"/>
</dbReference>
<dbReference type="FunFam" id="3.20.20.70:FF:000024">
    <property type="entry name" value="Indole-3-glycerol phosphate synthase"/>
    <property type="match status" value="1"/>
</dbReference>
<dbReference type="Gene3D" id="3.20.20.70">
    <property type="entry name" value="Aldolase class I"/>
    <property type="match status" value="1"/>
</dbReference>
<dbReference type="HAMAP" id="MF_00134_B">
    <property type="entry name" value="IGPS_B"/>
    <property type="match status" value="1"/>
</dbReference>
<dbReference type="InterPro" id="IPR013785">
    <property type="entry name" value="Aldolase_TIM"/>
</dbReference>
<dbReference type="InterPro" id="IPR045186">
    <property type="entry name" value="Indole-3-glycerol_P_synth"/>
</dbReference>
<dbReference type="InterPro" id="IPR013798">
    <property type="entry name" value="Indole-3-glycerol_P_synth_dom"/>
</dbReference>
<dbReference type="InterPro" id="IPR001468">
    <property type="entry name" value="Indole-3-GlycerolPSynthase_CS"/>
</dbReference>
<dbReference type="InterPro" id="IPR011060">
    <property type="entry name" value="RibuloseP-bd_barrel"/>
</dbReference>
<dbReference type="NCBIfam" id="NF001370">
    <property type="entry name" value="PRK00278.1-2"/>
    <property type="match status" value="1"/>
</dbReference>
<dbReference type="NCBIfam" id="NF001373">
    <property type="entry name" value="PRK00278.1-6"/>
    <property type="match status" value="1"/>
</dbReference>
<dbReference type="NCBIfam" id="NF001377">
    <property type="entry name" value="PRK00278.2-4"/>
    <property type="match status" value="1"/>
</dbReference>
<dbReference type="PANTHER" id="PTHR22854:SF2">
    <property type="entry name" value="INDOLE-3-GLYCEROL-PHOSPHATE SYNTHASE"/>
    <property type="match status" value="1"/>
</dbReference>
<dbReference type="PANTHER" id="PTHR22854">
    <property type="entry name" value="TRYPTOPHAN BIOSYNTHESIS PROTEIN"/>
    <property type="match status" value="1"/>
</dbReference>
<dbReference type="Pfam" id="PF00218">
    <property type="entry name" value="IGPS"/>
    <property type="match status" value="1"/>
</dbReference>
<dbReference type="SUPFAM" id="SSF51366">
    <property type="entry name" value="Ribulose-phoshate binding barrel"/>
    <property type="match status" value="1"/>
</dbReference>
<dbReference type="PROSITE" id="PS00614">
    <property type="entry name" value="IGPS"/>
    <property type="match status" value="1"/>
</dbReference>
<gene>
    <name evidence="1" type="primary">trpC</name>
    <name type="ordered locus">PSPA7_0792</name>
</gene>
<organism>
    <name type="scientific">Pseudomonas paraeruginosa (strain DSM 24068 / PA7)</name>
    <name type="common">Pseudomonas aeruginosa (strain PA7)</name>
    <dbReference type="NCBI Taxonomy" id="381754"/>
    <lineage>
        <taxon>Bacteria</taxon>
        <taxon>Pseudomonadati</taxon>
        <taxon>Pseudomonadota</taxon>
        <taxon>Gammaproteobacteria</taxon>
        <taxon>Pseudomonadales</taxon>
        <taxon>Pseudomonadaceae</taxon>
        <taxon>Pseudomonas</taxon>
        <taxon>Pseudomonas paraeruginosa</taxon>
    </lineage>
</organism>
<sequence>MSVPTVLQKILARKAEEVAERRARVNLAEVERLARSADAPRGFANALLERARRKEPAVIAEIKKASPSKGVLREHFVPAEIARSYEAGGAACLSVLTDVDFFQGADAYLKEARAACALPVIRKDFMIDPYQIVEARAIGADCILLIVSALDDMLMGELAATAKSVGLDVLVEVHDGAELERALKTLDTPLVGINNRNLHTFEVSLETTLDLLPEIPRDRLVVTESGILNRADVELMEVSEVYAFLVGEAFMRADDPGLELKRLFFQERGGVVLGADPD</sequence>
<accession>A6UZF2</accession>
<comment type="catalytic activity">
    <reaction evidence="1">
        <text>1-(2-carboxyphenylamino)-1-deoxy-D-ribulose 5-phosphate + H(+) = (1S,2R)-1-C-(indol-3-yl)glycerol 3-phosphate + CO2 + H2O</text>
        <dbReference type="Rhea" id="RHEA:23476"/>
        <dbReference type="ChEBI" id="CHEBI:15377"/>
        <dbReference type="ChEBI" id="CHEBI:15378"/>
        <dbReference type="ChEBI" id="CHEBI:16526"/>
        <dbReference type="ChEBI" id="CHEBI:58613"/>
        <dbReference type="ChEBI" id="CHEBI:58866"/>
        <dbReference type="EC" id="4.1.1.48"/>
    </reaction>
</comment>
<comment type="pathway">
    <text evidence="1">Amino-acid biosynthesis; L-tryptophan biosynthesis; L-tryptophan from chorismate: step 4/5.</text>
</comment>
<comment type="similarity">
    <text evidence="1">Belongs to the TrpC family.</text>
</comment>